<reference key="1">
    <citation type="submission" date="2001-07" db="EMBL/GenBank/DDBJ databases">
        <title>Genome-wide discovery and analysis of human seven transmembrane helix receptor genes.</title>
        <authorList>
            <person name="Suwa M."/>
            <person name="Sato T."/>
            <person name="Okouchi I."/>
            <person name="Arita M."/>
            <person name="Futami K."/>
            <person name="Matsumoto S."/>
            <person name="Tsutsumi S."/>
            <person name="Aburatani H."/>
            <person name="Asai K."/>
            <person name="Akiyama Y."/>
        </authorList>
    </citation>
    <scope>NUCLEOTIDE SEQUENCE [GENOMIC DNA]</scope>
    <scope>VARIANT LEU-225</scope>
</reference>
<reference key="2">
    <citation type="journal article" date="2006" name="Nature">
        <title>Analysis of the DNA sequence and duplication history of human chromosome 15.</title>
        <authorList>
            <person name="Zody M.C."/>
            <person name="Garber M."/>
            <person name="Sharpe T."/>
            <person name="Young S.K."/>
            <person name="Rowen L."/>
            <person name="O'Neill K."/>
            <person name="Whittaker C.A."/>
            <person name="Kamal M."/>
            <person name="Chang J.L."/>
            <person name="Cuomo C.A."/>
            <person name="Dewar K."/>
            <person name="FitzGerald M.G."/>
            <person name="Kodira C.D."/>
            <person name="Madan A."/>
            <person name="Qin S."/>
            <person name="Yang X."/>
            <person name="Abbasi N."/>
            <person name="Abouelleil A."/>
            <person name="Arachchi H.M."/>
            <person name="Baradarani L."/>
            <person name="Birditt B."/>
            <person name="Bloom S."/>
            <person name="Bloom T."/>
            <person name="Borowsky M.L."/>
            <person name="Burke J."/>
            <person name="Butler J."/>
            <person name="Cook A."/>
            <person name="DeArellano K."/>
            <person name="DeCaprio D."/>
            <person name="Dorris L. III"/>
            <person name="Dors M."/>
            <person name="Eichler E.E."/>
            <person name="Engels R."/>
            <person name="Fahey J."/>
            <person name="Fleetwood P."/>
            <person name="Friedman C."/>
            <person name="Gearin G."/>
            <person name="Hall J.L."/>
            <person name="Hensley G."/>
            <person name="Johnson E."/>
            <person name="Jones C."/>
            <person name="Kamat A."/>
            <person name="Kaur A."/>
            <person name="Locke D.P."/>
            <person name="Madan A."/>
            <person name="Munson G."/>
            <person name="Jaffe D.B."/>
            <person name="Lui A."/>
            <person name="Macdonald P."/>
            <person name="Mauceli E."/>
            <person name="Naylor J.W."/>
            <person name="Nesbitt R."/>
            <person name="Nicol R."/>
            <person name="O'Leary S.B."/>
            <person name="Ratcliffe A."/>
            <person name="Rounsley S."/>
            <person name="She X."/>
            <person name="Sneddon K.M.B."/>
            <person name="Stewart S."/>
            <person name="Sougnez C."/>
            <person name="Stone S.M."/>
            <person name="Topham K."/>
            <person name="Vincent D."/>
            <person name="Wang S."/>
            <person name="Zimmer A.R."/>
            <person name="Birren B.W."/>
            <person name="Hood L."/>
            <person name="Lander E.S."/>
            <person name="Nusbaum C."/>
        </authorList>
    </citation>
    <scope>NUCLEOTIDE SEQUENCE [LARGE SCALE GENOMIC DNA]</scope>
</reference>
<reference key="3">
    <citation type="journal article" date="2004" name="Genome Res.">
        <title>The status, quality, and expansion of the NIH full-length cDNA project: the Mammalian Gene Collection (MGC).</title>
        <authorList>
            <consortium name="The MGC Project Team"/>
        </authorList>
    </citation>
    <scope>NUCLEOTIDE SEQUENCE [LARGE SCALE MRNA]</scope>
    <scope>VARIANTS GLU-96 AND LEU-225</scope>
    <source>
        <tissue>Testis</tissue>
    </source>
</reference>
<reference key="4">
    <citation type="journal article" date="2004" name="Proc. Natl. Acad. Sci. U.S.A.">
        <title>The human olfactory receptor gene family.</title>
        <authorList>
            <person name="Malnic B."/>
            <person name="Godfrey P.A."/>
            <person name="Buck L.B."/>
        </authorList>
    </citation>
    <scope>IDENTIFICATION</scope>
</reference>
<reference key="5">
    <citation type="journal article" date="2004" name="Proc. Natl. Acad. Sci. U.S.A.">
        <authorList>
            <person name="Malnic B."/>
            <person name="Godfrey P.A."/>
            <person name="Buck L.B."/>
        </authorList>
    </citation>
    <scope>ERRATUM OF PUBMED:14983052</scope>
</reference>
<gene>
    <name type="primary">OR4M2</name>
</gene>
<evidence type="ECO:0000255" key="1"/>
<evidence type="ECO:0000255" key="2">
    <source>
        <dbReference type="PROSITE-ProRule" id="PRU00521"/>
    </source>
</evidence>
<evidence type="ECO:0000269" key="3">
    <source>
    </source>
</evidence>
<evidence type="ECO:0000269" key="4">
    <source ref="1"/>
</evidence>
<evidence type="ECO:0000305" key="5"/>
<dbReference type="EMBL" id="AB065903">
    <property type="protein sequence ID" value="BAC06118.1"/>
    <property type="molecule type" value="Genomic_DNA"/>
</dbReference>
<dbReference type="EMBL" id="AC134980">
    <property type="status" value="NOT_ANNOTATED_CDS"/>
    <property type="molecule type" value="Genomic_DNA"/>
</dbReference>
<dbReference type="EMBL" id="BC136985">
    <property type="protein sequence ID" value="AAI36986.1"/>
    <property type="molecule type" value="mRNA"/>
</dbReference>
<dbReference type="EMBL" id="BK004480">
    <property type="protein sequence ID" value="DAA04878.1"/>
    <property type="molecule type" value="Genomic_DNA"/>
</dbReference>
<dbReference type="CCDS" id="CCDS32172.1"/>
<dbReference type="RefSeq" id="NP_001004719.2">
    <property type="nucleotide sequence ID" value="NM_001004719.2"/>
</dbReference>
<dbReference type="SMR" id="Q8NGB6"/>
<dbReference type="FunCoup" id="Q8NGB6">
    <property type="interactions" value="416"/>
</dbReference>
<dbReference type="STRING" id="9606.ENSP00000483239"/>
<dbReference type="GlyCosmos" id="Q8NGB6">
    <property type="glycosylation" value="1 site, No reported glycans"/>
</dbReference>
<dbReference type="GlyGen" id="Q8NGB6">
    <property type="glycosylation" value="1 site"/>
</dbReference>
<dbReference type="iPTMnet" id="Q8NGB6"/>
<dbReference type="BioMuta" id="OR4M2"/>
<dbReference type="DMDM" id="311033407"/>
<dbReference type="MassIVE" id="Q8NGB6"/>
<dbReference type="PaxDb" id="9606-ENSP00000483239"/>
<dbReference type="Antibodypedia" id="72861">
    <property type="antibodies" value="57 antibodies from 13 providers"/>
</dbReference>
<dbReference type="DNASU" id="390538"/>
<dbReference type="Ensembl" id="ENST00000614722.3">
    <property type="protein sequence ID" value="ENSP00000483239.1"/>
    <property type="gene ID" value="ENSG00000274102.3"/>
</dbReference>
<dbReference type="GeneID" id="390538"/>
<dbReference type="KEGG" id="hsa:390538"/>
<dbReference type="MANE-Select" id="ENST00000614722.3">
    <property type="protein sequence ID" value="ENSP00000483239.1"/>
    <property type="RefSeq nucleotide sequence ID" value="NM_001004719.2"/>
    <property type="RefSeq protein sequence ID" value="NP_001004719.2"/>
</dbReference>
<dbReference type="UCSC" id="uc010tzu.3">
    <property type="organism name" value="human"/>
</dbReference>
<dbReference type="AGR" id="HGNC:15373"/>
<dbReference type="CTD" id="390538"/>
<dbReference type="GeneCards" id="OR4M2"/>
<dbReference type="HGNC" id="HGNC:15373">
    <property type="gene designation" value="OR4M2"/>
</dbReference>
<dbReference type="HPA" id="ENSG00000274102">
    <property type="expression patterns" value="Not detected"/>
</dbReference>
<dbReference type="neXtProt" id="NX_Q8NGB6"/>
<dbReference type="OpenTargets" id="ENSG00000274102"/>
<dbReference type="PharmGKB" id="PA32328"/>
<dbReference type="VEuPathDB" id="HostDB:ENSG00000274102"/>
<dbReference type="eggNOG" id="ENOG502SKDS">
    <property type="taxonomic scope" value="Eukaryota"/>
</dbReference>
<dbReference type="GeneTree" id="ENSGT00940000163142"/>
<dbReference type="HOGENOM" id="CLU_012526_8_1_1"/>
<dbReference type="InParanoid" id="Q8NGB6"/>
<dbReference type="OrthoDB" id="6130476at2759"/>
<dbReference type="PAN-GO" id="Q8NGB6">
    <property type="GO annotations" value="2 GO annotations based on evolutionary models"/>
</dbReference>
<dbReference type="PhylomeDB" id="Q8NGB6"/>
<dbReference type="TreeFam" id="TF338273"/>
<dbReference type="PathwayCommons" id="Q8NGB6"/>
<dbReference type="Reactome" id="R-HSA-9752946">
    <property type="pathway name" value="Expression and translocation of olfactory receptors"/>
</dbReference>
<dbReference type="BioGRID-ORCS" id="390538">
    <property type="hits" value="17 hits in 648 CRISPR screens"/>
</dbReference>
<dbReference type="GeneWiki" id="OR4M2"/>
<dbReference type="GenomeRNAi" id="390538"/>
<dbReference type="Pharos" id="Q8NGB6">
    <property type="development level" value="Tdark"/>
</dbReference>
<dbReference type="PRO" id="PR:Q8NGB6"/>
<dbReference type="Proteomes" id="UP000005640">
    <property type="component" value="Chromosome 15"/>
</dbReference>
<dbReference type="RNAct" id="Q8NGB6">
    <property type="molecule type" value="protein"/>
</dbReference>
<dbReference type="Bgee" id="ENSG00000274102">
    <property type="expression patterns" value="Expressed in male germ line stem cell (sensu Vertebrata) in testis and 7 other cell types or tissues"/>
</dbReference>
<dbReference type="GO" id="GO:0005886">
    <property type="term" value="C:plasma membrane"/>
    <property type="evidence" value="ECO:0000318"/>
    <property type="project" value="GO_Central"/>
</dbReference>
<dbReference type="GO" id="GO:0004930">
    <property type="term" value="F:G protein-coupled receptor activity"/>
    <property type="evidence" value="ECO:0007669"/>
    <property type="project" value="UniProtKB-KW"/>
</dbReference>
<dbReference type="GO" id="GO:0004984">
    <property type="term" value="F:olfactory receptor activity"/>
    <property type="evidence" value="ECO:0000318"/>
    <property type="project" value="GO_Central"/>
</dbReference>
<dbReference type="CDD" id="cd15937">
    <property type="entry name" value="7tmA_OR4N-like"/>
    <property type="match status" value="1"/>
</dbReference>
<dbReference type="FunFam" id="1.10.1220.70:FF:000001">
    <property type="entry name" value="Olfactory receptor"/>
    <property type="match status" value="1"/>
</dbReference>
<dbReference type="FunFam" id="1.20.1070.10:FF:000012">
    <property type="entry name" value="Olfactory receptor"/>
    <property type="match status" value="1"/>
</dbReference>
<dbReference type="Gene3D" id="1.20.1070.10">
    <property type="entry name" value="Rhodopsin 7-helix transmembrane proteins"/>
    <property type="match status" value="1"/>
</dbReference>
<dbReference type="InterPro" id="IPR000276">
    <property type="entry name" value="GPCR_Rhodpsn"/>
</dbReference>
<dbReference type="InterPro" id="IPR017452">
    <property type="entry name" value="GPCR_Rhodpsn_7TM"/>
</dbReference>
<dbReference type="InterPro" id="IPR000725">
    <property type="entry name" value="Olfact_rcpt"/>
</dbReference>
<dbReference type="InterPro" id="IPR050427">
    <property type="entry name" value="Olfactory_Receptors"/>
</dbReference>
<dbReference type="PANTHER" id="PTHR48002">
    <property type="entry name" value="OLFACTORY RECEPTOR"/>
    <property type="match status" value="1"/>
</dbReference>
<dbReference type="Pfam" id="PF13853">
    <property type="entry name" value="7tm_4"/>
    <property type="match status" value="1"/>
</dbReference>
<dbReference type="PRINTS" id="PR00237">
    <property type="entry name" value="GPCRRHODOPSN"/>
</dbReference>
<dbReference type="PRINTS" id="PR00245">
    <property type="entry name" value="OLFACTORYR"/>
</dbReference>
<dbReference type="SUPFAM" id="SSF81321">
    <property type="entry name" value="Family A G protein-coupled receptor-like"/>
    <property type="match status" value="1"/>
</dbReference>
<dbReference type="PROSITE" id="PS50262">
    <property type="entry name" value="G_PROTEIN_RECEP_F1_2"/>
    <property type="match status" value="1"/>
</dbReference>
<keyword id="KW-1003">Cell membrane</keyword>
<keyword id="KW-1015">Disulfide bond</keyword>
<keyword id="KW-0297">G-protein coupled receptor</keyword>
<keyword id="KW-0325">Glycoprotein</keyword>
<keyword id="KW-0472">Membrane</keyword>
<keyword id="KW-0552">Olfaction</keyword>
<keyword id="KW-0675">Receptor</keyword>
<keyword id="KW-1185">Reference proteome</keyword>
<keyword id="KW-0716">Sensory transduction</keyword>
<keyword id="KW-0807">Transducer</keyword>
<keyword id="KW-0812">Transmembrane</keyword>
<keyword id="KW-1133">Transmembrane helix</keyword>
<name>OR4M2_HUMAN</name>
<accession>Q8NGB6</accession>
<accession>B9EH16</accession>
<accession>Q6IEY2</accession>
<organism>
    <name type="scientific">Homo sapiens</name>
    <name type="common">Human</name>
    <dbReference type="NCBI Taxonomy" id="9606"/>
    <lineage>
        <taxon>Eukaryota</taxon>
        <taxon>Metazoa</taxon>
        <taxon>Chordata</taxon>
        <taxon>Craniata</taxon>
        <taxon>Vertebrata</taxon>
        <taxon>Euteleostomi</taxon>
        <taxon>Mammalia</taxon>
        <taxon>Eutheria</taxon>
        <taxon>Euarchontoglires</taxon>
        <taxon>Primates</taxon>
        <taxon>Haplorrhini</taxon>
        <taxon>Catarrhini</taxon>
        <taxon>Hominidae</taxon>
        <taxon>Homo</taxon>
    </lineage>
</organism>
<feature type="chain" id="PRO_0000150562" description="Olfactory receptor 4M2">
    <location>
        <begin position="1"/>
        <end position="313"/>
    </location>
</feature>
<feature type="topological domain" description="Extracellular" evidence="1">
    <location>
        <begin position="1"/>
        <end position="25"/>
    </location>
</feature>
<feature type="transmembrane region" description="Helical; Name=1" evidence="1">
    <location>
        <begin position="26"/>
        <end position="49"/>
    </location>
</feature>
<feature type="topological domain" description="Cytoplasmic" evidence="1">
    <location>
        <begin position="50"/>
        <end position="57"/>
    </location>
</feature>
<feature type="transmembrane region" description="Helical; Name=2" evidence="1">
    <location>
        <begin position="58"/>
        <end position="79"/>
    </location>
</feature>
<feature type="topological domain" description="Extracellular" evidence="1">
    <location>
        <begin position="80"/>
        <end position="100"/>
    </location>
</feature>
<feature type="transmembrane region" description="Helical; Name=3" evidence="1">
    <location>
        <begin position="101"/>
        <end position="120"/>
    </location>
</feature>
<feature type="topological domain" description="Cytoplasmic" evidence="1">
    <location>
        <begin position="121"/>
        <end position="139"/>
    </location>
</feature>
<feature type="transmembrane region" description="Helical; Name=4" evidence="1">
    <location>
        <begin position="140"/>
        <end position="158"/>
    </location>
</feature>
<feature type="topological domain" description="Extracellular" evidence="1">
    <location>
        <begin position="159"/>
        <end position="195"/>
    </location>
</feature>
<feature type="transmembrane region" description="Helical; Name=5" evidence="1">
    <location>
        <begin position="196"/>
        <end position="219"/>
    </location>
</feature>
<feature type="topological domain" description="Cytoplasmic" evidence="1">
    <location>
        <begin position="220"/>
        <end position="237"/>
    </location>
</feature>
<feature type="transmembrane region" description="Helical; Name=6" evidence="1">
    <location>
        <begin position="238"/>
        <end position="260"/>
    </location>
</feature>
<feature type="topological domain" description="Extracellular" evidence="1">
    <location>
        <begin position="261"/>
        <end position="271"/>
    </location>
</feature>
<feature type="transmembrane region" description="Helical; Name=7" evidence="1">
    <location>
        <begin position="272"/>
        <end position="291"/>
    </location>
</feature>
<feature type="topological domain" description="Cytoplasmic" evidence="1">
    <location>
        <begin position="292"/>
        <end position="313"/>
    </location>
</feature>
<feature type="glycosylation site" description="N-linked (GlcNAc...) asparagine" evidence="1">
    <location>
        <position position="5"/>
    </location>
</feature>
<feature type="disulfide bond" evidence="2">
    <location>
        <begin position="97"/>
        <end position="189"/>
    </location>
</feature>
<feature type="sequence variant" id="VAR_047831" description="In dbSNP:rs1835183." evidence="3">
    <original>G</original>
    <variation>E</variation>
    <location>
        <position position="96"/>
    </location>
</feature>
<feature type="sequence variant" id="VAR_047832" description="In dbSNP:rs11857531.">
    <original>D</original>
    <variation>N</variation>
    <location>
        <position position="121"/>
    </location>
</feature>
<feature type="sequence variant" id="VAR_047833" description="In dbSNP:rs491208." evidence="3 4">
    <original>F</original>
    <variation>L</variation>
    <location>
        <position position="225"/>
    </location>
</feature>
<feature type="sequence variant" id="VAR_047834" description="In dbSNP:rs12593418.">
    <original>M</original>
    <variation>V</variation>
    <location>
        <position position="239"/>
    </location>
</feature>
<feature type="sequence variant" id="VAR_047835" description="In dbSNP:rs4087943.">
    <original>R</original>
    <variation>H</variation>
    <location>
        <position position="284"/>
    </location>
</feature>
<comment type="function">
    <text evidence="5">Odorant receptor.</text>
</comment>
<comment type="subcellular location">
    <subcellularLocation>
        <location>Cell membrane</location>
        <topology>Multi-pass membrane protein</topology>
    </subcellularLocation>
</comment>
<comment type="similarity">
    <text evidence="2">Belongs to the G-protein coupled receptor 1 family.</text>
</comment>
<comment type="online information" name="Human Olfactory Receptor Data Exploratorium (HORDE)">
    <link uri="http://genome.weizmann.ac.il/horde/card/index/symbol:OR4M2"/>
</comment>
<protein>
    <recommendedName>
        <fullName>Olfactory receptor 4M2</fullName>
    </recommendedName>
    <alternativeName>
        <fullName>Olfactory receptor OR15-3</fullName>
    </alternativeName>
</protein>
<sequence length="313" mass="35416">METANYTKVTEFVLTGLSQTPEVQLVLFVIFLSFYLFILPGNILIICTISLDPHLTSPMYFLLANLAFLDIWYSSITAPEMLIDFFVERKIISFDGCIAQLFFLHFAGASEMFLLTVMAFDLYTAICRPLHYATIMNQRLCCILVALSWRGGFIHSIIQVALIVRLPFCGPNELDSYFCDITQVVRIACANTFPEELVMICSSGLISVVCLIALLMSYAFLLALFKKLSGSGENTNRAMSTCYSHITIVVLMFGPSIYIYARPFDSFSLDKVVSVFNTLIFPLRNPIIYTLRNKEVKAAMRKLVTKYILCKEK</sequence>
<proteinExistence type="evidence at transcript level"/>